<name>AROE_METKA</name>
<accession>Q8TZ24</accession>
<dbReference type="EC" id="1.1.1.25" evidence="1"/>
<dbReference type="EMBL" id="AE009439">
    <property type="protein sequence ID" value="AAM01334.1"/>
    <property type="molecule type" value="Genomic_DNA"/>
</dbReference>
<dbReference type="PIR" id="S65949">
    <property type="entry name" value="S65949"/>
</dbReference>
<dbReference type="RefSeq" id="WP_011018489.1">
    <property type="nucleotide sequence ID" value="NC_003551.1"/>
</dbReference>
<dbReference type="SMR" id="Q8TZ24"/>
<dbReference type="FunCoup" id="Q8TZ24">
    <property type="interactions" value="72"/>
</dbReference>
<dbReference type="STRING" id="190192.MK0117"/>
<dbReference type="PaxDb" id="190192-MK0117"/>
<dbReference type="EnsemblBacteria" id="AAM01334">
    <property type="protein sequence ID" value="AAM01334"/>
    <property type="gene ID" value="MK0117"/>
</dbReference>
<dbReference type="GeneID" id="1477420"/>
<dbReference type="KEGG" id="mka:MK0117"/>
<dbReference type="PATRIC" id="fig|190192.8.peg.116"/>
<dbReference type="HOGENOM" id="CLU_044063_4_1_2"/>
<dbReference type="InParanoid" id="Q8TZ24"/>
<dbReference type="OrthoDB" id="8744at2157"/>
<dbReference type="UniPathway" id="UPA00053">
    <property type="reaction ID" value="UER00087"/>
</dbReference>
<dbReference type="Proteomes" id="UP000001826">
    <property type="component" value="Chromosome"/>
</dbReference>
<dbReference type="GO" id="GO:0050661">
    <property type="term" value="F:NADP binding"/>
    <property type="evidence" value="ECO:0007669"/>
    <property type="project" value="InterPro"/>
</dbReference>
<dbReference type="GO" id="GO:0004764">
    <property type="term" value="F:shikimate 3-dehydrogenase (NADP+) activity"/>
    <property type="evidence" value="ECO:0007669"/>
    <property type="project" value="UniProtKB-UniRule"/>
</dbReference>
<dbReference type="GO" id="GO:0008652">
    <property type="term" value="P:amino acid biosynthetic process"/>
    <property type="evidence" value="ECO:0007669"/>
    <property type="project" value="UniProtKB-KW"/>
</dbReference>
<dbReference type="GO" id="GO:0009073">
    <property type="term" value="P:aromatic amino acid family biosynthetic process"/>
    <property type="evidence" value="ECO:0007669"/>
    <property type="project" value="UniProtKB-KW"/>
</dbReference>
<dbReference type="GO" id="GO:0009423">
    <property type="term" value="P:chorismate biosynthetic process"/>
    <property type="evidence" value="ECO:0007669"/>
    <property type="project" value="UniProtKB-UniRule"/>
</dbReference>
<dbReference type="GO" id="GO:0019632">
    <property type="term" value="P:shikimate metabolic process"/>
    <property type="evidence" value="ECO:0007669"/>
    <property type="project" value="InterPro"/>
</dbReference>
<dbReference type="CDD" id="cd01065">
    <property type="entry name" value="NAD_bind_Shikimate_DH"/>
    <property type="match status" value="1"/>
</dbReference>
<dbReference type="FunFam" id="3.40.50.720:FF:000086">
    <property type="entry name" value="Quinate/shikimate dehydrogenase"/>
    <property type="match status" value="1"/>
</dbReference>
<dbReference type="Gene3D" id="3.40.50.10860">
    <property type="entry name" value="Leucine Dehydrogenase, chain A, domain 1"/>
    <property type="match status" value="1"/>
</dbReference>
<dbReference type="Gene3D" id="3.40.50.720">
    <property type="entry name" value="NAD(P)-binding Rossmann-like Domain"/>
    <property type="match status" value="1"/>
</dbReference>
<dbReference type="HAMAP" id="MF_00222">
    <property type="entry name" value="Shikimate_DH_AroE"/>
    <property type="match status" value="1"/>
</dbReference>
<dbReference type="InterPro" id="IPR046346">
    <property type="entry name" value="Aminoacid_DH-like_N_sf"/>
</dbReference>
<dbReference type="InterPro" id="IPR036291">
    <property type="entry name" value="NAD(P)-bd_dom_sf"/>
</dbReference>
<dbReference type="InterPro" id="IPR041121">
    <property type="entry name" value="SDH_C"/>
</dbReference>
<dbReference type="InterPro" id="IPR011342">
    <property type="entry name" value="Shikimate_DH"/>
</dbReference>
<dbReference type="InterPro" id="IPR013708">
    <property type="entry name" value="Shikimate_DH-bd_N"/>
</dbReference>
<dbReference type="InterPro" id="IPR022893">
    <property type="entry name" value="Shikimate_DH_fam"/>
</dbReference>
<dbReference type="InterPro" id="IPR006151">
    <property type="entry name" value="Shikm_DH/Glu-tRNA_Rdtase"/>
</dbReference>
<dbReference type="NCBIfam" id="TIGR00507">
    <property type="entry name" value="aroE"/>
    <property type="match status" value="1"/>
</dbReference>
<dbReference type="NCBIfam" id="NF001314">
    <property type="entry name" value="PRK00258.2-2"/>
    <property type="match status" value="1"/>
</dbReference>
<dbReference type="NCBIfam" id="NF001319">
    <property type="entry name" value="PRK00258.3-3"/>
    <property type="match status" value="1"/>
</dbReference>
<dbReference type="PANTHER" id="PTHR21089:SF1">
    <property type="entry name" value="BIFUNCTIONAL 3-DEHYDROQUINATE DEHYDRATASE_SHIKIMATE DEHYDROGENASE, CHLOROPLASTIC"/>
    <property type="match status" value="1"/>
</dbReference>
<dbReference type="PANTHER" id="PTHR21089">
    <property type="entry name" value="SHIKIMATE DEHYDROGENASE"/>
    <property type="match status" value="1"/>
</dbReference>
<dbReference type="Pfam" id="PF18317">
    <property type="entry name" value="SDH_C"/>
    <property type="match status" value="1"/>
</dbReference>
<dbReference type="Pfam" id="PF01488">
    <property type="entry name" value="Shikimate_DH"/>
    <property type="match status" value="1"/>
</dbReference>
<dbReference type="Pfam" id="PF08501">
    <property type="entry name" value="Shikimate_dh_N"/>
    <property type="match status" value="1"/>
</dbReference>
<dbReference type="SUPFAM" id="SSF53223">
    <property type="entry name" value="Aminoacid dehydrogenase-like, N-terminal domain"/>
    <property type="match status" value="1"/>
</dbReference>
<dbReference type="SUPFAM" id="SSF51735">
    <property type="entry name" value="NAD(P)-binding Rossmann-fold domains"/>
    <property type="match status" value="1"/>
</dbReference>
<comment type="function">
    <text evidence="1">Involved in the biosynthesis of the chorismate, which leads to the biosynthesis of aromatic amino acids. Catalyzes the reversible NADPH linked reduction of 3-dehydroshikimate (DHSA) to yield shikimate (SA).</text>
</comment>
<comment type="catalytic activity">
    <reaction evidence="1">
        <text>shikimate + NADP(+) = 3-dehydroshikimate + NADPH + H(+)</text>
        <dbReference type="Rhea" id="RHEA:17737"/>
        <dbReference type="ChEBI" id="CHEBI:15378"/>
        <dbReference type="ChEBI" id="CHEBI:16630"/>
        <dbReference type="ChEBI" id="CHEBI:36208"/>
        <dbReference type="ChEBI" id="CHEBI:57783"/>
        <dbReference type="ChEBI" id="CHEBI:58349"/>
        <dbReference type="EC" id="1.1.1.25"/>
    </reaction>
</comment>
<comment type="pathway">
    <text evidence="1">Metabolic intermediate biosynthesis; chorismate biosynthesis; chorismate from D-erythrose 4-phosphate and phosphoenolpyruvate: step 4/7.</text>
</comment>
<comment type="subunit">
    <text evidence="1">Homodimer.</text>
</comment>
<comment type="similarity">
    <text evidence="1">Belongs to the shikimate dehydrogenase family.</text>
</comment>
<organism>
    <name type="scientific">Methanopyrus kandleri (strain AV19 / DSM 6324 / JCM 9639 / NBRC 100938)</name>
    <dbReference type="NCBI Taxonomy" id="190192"/>
    <lineage>
        <taxon>Archaea</taxon>
        <taxon>Methanobacteriati</taxon>
        <taxon>Methanobacteriota</taxon>
        <taxon>Methanomada group</taxon>
        <taxon>Methanopyri</taxon>
        <taxon>Methanopyrales</taxon>
        <taxon>Methanopyraceae</taxon>
        <taxon>Methanopyrus</taxon>
    </lineage>
</organism>
<proteinExistence type="inferred from homology"/>
<reference key="1">
    <citation type="journal article" date="2002" name="Proc. Natl. Acad. Sci. U.S.A.">
        <title>The complete genome of hyperthermophile Methanopyrus kandleri AV19 and monophyly of archaeal methanogens.</title>
        <authorList>
            <person name="Slesarev A.I."/>
            <person name="Mezhevaya K.V."/>
            <person name="Makarova K.S."/>
            <person name="Polushin N.N."/>
            <person name="Shcherbinina O.V."/>
            <person name="Shakhova V.V."/>
            <person name="Belova G.I."/>
            <person name="Aravind L."/>
            <person name="Natale D.A."/>
            <person name="Rogozin I.B."/>
            <person name="Tatusov R.L."/>
            <person name="Wolf Y.I."/>
            <person name="Stetter K.O."/>
            <person name="Malykh A.G."/>
            <person name="Koonin E.V."/>
            <person name="Kozyavkin S.A."/>
        </authorList>
    </citation>
    <scope>NUCLEOTIDE SEQUENCE [LARGE SCALE GENOMIC DNA]</scope>
    <source>
        <strain>AV19 / DSM 6324 / JCM 9639 / NBRC 100938</strain>
    </source>
</reference>
<gene>
    <name evidence="1" type="primary">aroE</name>
    <name type="ordered locus">MK0117</name>
</gene>
<evidence type="ECO:0000255" key="1">
    <source>
        <dbReference type="HAMAP-Rule" id="MF_00222"/>
    </source>
</evidence>
<keyword id="KW-0028">Amino-acid biosynthesis</keyword>
<keyword id="KW-0057">Aromatic amino acid biosynthesis</keyword>
<keyword id="KW-0521">NADP</keyword>
<keyword id="KW-0560">Oxidoreductase</keyword>
<keyword id="KW-1185">Reference proteome</keyword>
<protein>
    <recommendedName>
        <fullName evidence="1">Shikimate dehydrogenase (NADP(+))</fullName>
        <shortName evidence="1">SDH</shortName>
        <ecNumber evidence="1">1.1.1.25</ecNumber>
    </recommendedName>
</protein>
<feature type="chain" id="PRO_0000136061" description="Shikimate dehydrogenase (NADP(+))">
    <location>
        <begin position="1"/>
        <end position="290"/>
    </location>
</feature>
<feature type="active site" description="Proton acceptor" evidence="1">
    <location>
        <position position="75"/>
    </location>
</feature>
<feature type="binding site" evidence="1">
    <location>
        <begin position="24"/>
        <end position="26"/>
    </location>
    <ligand>
        <name>shikimate</name>
        <dbReference type="ChEBI" id="CHEBI:36208"/>
    </ligand>
</feature>
<feature type="binding site" evidence="1">
    <location>
        <position position="71"/>
    </location>
    <ligand>
        <name>shikimate</name>
        <dbReference type="ChEBI" id="CHEBI:36208"/>
    </ligand>
</feature>
<feature type="binding site" evidence="1">
    <location>
        <position position="96"/>
    </location>
    <ligand>
        <name>shikimate</name>
        <dbReference type="ChEBI" id="CHEBI:36208"/>
    </ligand>
</feature>
<feature type="binding site" evidence="1">
    <location>
        <position position="111"/>
    </location>
    <ligand>
        <name>shikimate</name>
        <dbReference type="ChEBI" id="CHEBI:36208"/>
    </ligand>
</feature>
<feature type="binding site" evidence="1">
    <location>
        <begin position="136"/>
        <end position="140"/>
    </location>
    <ligand>
        <name>NADP(+)</name>
        <dbReference type="ChEBI" id="CHEBI:58349"/>
    </ligand>
</feature>
<feature type="binding site" evidence="1">
    <location>
        <begin position="160"/>
        <end position="165"/>
    </location>
    <ligand>
        <name>NADP(+)</name>
        <dbReference type="ChEBI" id="CHEBI:58349"/>
    </ligand>
</feature>
<feature type="binding site" evidence="1">
    <location>
        <position position="233"/>
    </location>
    <ligand>
        <name>NADP(+)</name>
        <dbReference type="ChEBI" id="CHEBI:58349"/>
    </ligand>
</feature>
<feature type="binding site" evidence="1">
    <location>
        <position position="235"/>
    </location>
    <ligand>
        <name>shikimate</name>
        <dbReference type="ChEBI" id="CHEBI:36208"/>
    </ligand>
</feature>
<feature type="binding site" evidence="1">
    <location>
        <position position="256"/>
    </location>
    <ligand>
        <name>NADP(+)</name>
        <dbReference type="ChEBI" id="CHEBI:58349"/>
    </ligand>
</feature>
<sequence length="290" mass="31413">MSVSVSVDAETNVVGLIGHPVEHSLSPAMHNAAFKELGLNYVYLAFDVPPERLEGAVRGAADLGIVGLNVTIPHKEAVMELCDELDRDAELIGAVNTVRFSRGKIEGFNTDGEGFLRALREETYFDPRGTKSVILGAGGAARAVSFKLATEGADEIVIANRTVDRAERLAEELKEKVGVKARAIGLDGDEIERELRDADLLVDATPVGMYPNEDEPPLVTADQMHEDLIVNDLVYNPPRTRLLEEAEKAGATPVSGVGMLVYQGALAFELWTGEEAPVEVMREAVLEHLR</sequence>